<proteinExistence type="inferred from homology"/>
<protein>
    <recommendedName>
        <fullName evidence="1">Crossover junction endodeoxyribonuclease RuvC</fullName>
        <ecNumber evidence="1">3.1.21.10</ecNumber>
    </recommendedName>
    <alternativeName>
        <fullName evidence="1">Holliday junction nuclease RuvC</fullName>
    </alternativeName>
    <alternativeName>
        <fullName evidence="1">Holliday junction resolvase RuvC</fullName>
    </alternativeName>
</protein>
<feature type="chain" id="PRO_1000002720" description="Crossover junction endodeoxyribonuclease RuvC">
    <location>
        <begin position="1"/>
        <end position="173"/>
    </location>
</feature>
<feature type="active site" evidence="1">
    <location>
        <position position="8"/>
    </location>
</feature>
<feature type="active site" evidence="1">
    <location>
        <position position="67"/>
    </location>
</feature>
<feature type="active site" evidence="1">
    <location>
        <position position="139"/>
    </location>
</feature>
<feature type="binding site" evidence="1">
    <location>
        <position position="8"/>
    </location>
    <ligand>
        <name>Mg(2+)</name>
        <dbReference type="ChEBI" id="CHEBI:18420"/>
        <label>1</label>
    </ligand>
</feature>
<feature type="binding site" evidence="1">
    <location>
        <position position="67"/>
    </location>
    <ligand>
        <name>Mg(2+)</name>
        <dbReference type="ChEBI" id="CHEBI:18420"/>
        <label>2</label>
    </ligand>
</feature>
<feature type="binding site" evidence="1">
    <location>
        <position position="139"/>
    </location>
    <ligand>
        <name>Mg(2+)</name>
        <dbReference type="ChEBI" id="CHEBI:18420"/>
        <label>1</label>
    </ligand>
</feature>
<name>RUVC_BAUCH</name>
<gene>
    <name evidence="1" type="primary">ruvC</name>
    <name type="ordered locus">BCI_0314</name>
</gene>
<organism>
    <name type="scientific">Baumannia cicadellinicola subsp. Homalodisca coagulata</name>
    <dbReference type="NCBI Taxonomy" id="374463"/>
    <lineage>
        <taxon>Bacteria</taxon>
        <taxon>Pseudomonadati</taxon>
        <taxon>Pseudomonadota</taxon>
        <taxon>Gammaproteobacteria</taxon>
        <taxon>Candidatus Palibaumannia</taxon>
    </lineage>
</organism>
<keyword id="KW-0963">Cytoplasm</keyword>
<keyword id="KW-0227">DNA damage</keyword>
<keyword id="KW-0233">DNA recombination</keyword>
<keyword id="KW-0234">DNA repair</keyword>
<keyword id="KW-0238">DNA-binding</keyword>
<keyword id="KW-0255">Endonuclease</keyword>
<keyword id="KW-0378">Hydrolase</keyword>
<keyword id="KW-0460">Magnesium</keyword>
<keyword id="KW-0479">Metal-binding</keyword>
<keyword id="KW-0540">Nuclease</keyword>
<keyword id="KW-1185">Reference proteome</keyword>
<dbReference type="EC" id="3.1.21.10" evidence="1"/>
<dbReference type="EMBL" id="CP000238">
    <property type="protein sequence ID" value="ABF14240.1"/>
    <property type="molecule type" value="Genomic_DNA"/>
</dbReference>
<dbReference type="RefSeq" id="WP_011520496.1">
    <property type="nucleotide sequence ID" value="NC_007984.1"/>
</dbReference>
<dbReference type="SMR" id="Q1LTF1"/>
<dbReference type="STRING" id="374463.BCI_0314"/>
<dbReference type="KEGG" id="bci:BCI_0314"/>
<dbReference type="HOGENOM" id="CLU_091257_2_1_6"/>
<dbReference type="OrthoDB" id="9805499at2"/>
<dbReference type="Proteomes" id="UP000002427">
    <property type="component" value="Chromosome"/>
</dbReference>
<dbReference type="GO" id="GO:0005737">
    <property type="term" value="C:cytoplasm"/>
    <property type="evidence" value="ECO:0007669"/>
    <property type="project" value="UniProtKB-SubCell"/>
</dbReference>
<dbReference type="GO" id="GO:0048476">
    <property type="term" value="C:Holliday junction resolvase complex"/>
    <property type="evidence" value="ECO:0007669"/>
    <property type="project" value="UniProtKB-UniRule"/>
</dbReference>
<dbReference type="GO" id="GO:0008821">
    <property type="term" value="F:crossover junction DNA endonuclease activity"/>
    <property type="evidence" value="ECO:0007669"/>
    <property type="project" value="UniProtKB-UniRule"/>
</dbReference>
<dbReference type="GO" id="GO:0003677">
    <property type="term" value="F:DNA binding"/>
    <property type="evidence" value="ECO:0007669"/>
    <property type="project" value="UniProtKB-KW"/>
</dbReference>
<dbReference type="GO" id="GO:0000287">
    <property type="term" value="F:magnesium ion binding"/>
    <property type="evidence" value="ECO:0007669"/>
    <property type="project" value="UniProtKB-UniRule"/>
</dbReference>
<dbReference type="GO" id="GO:0006310">
    <property type="term" value="P:DNA recombination"/>
    <property type="evidence" value="ECO:0007669"/>
    <property type="project" value="UniProtKB-UniRule"/>
</dbReference>
<dbReference type="GO" id="GO:0006281">
    <property type="term" value="P:DNA repair"/>
    <property type="evidence" value="ECO:0007669"/>
    <property type="project" value="UniProtKB-UniRule"/>
</dbReference>
<dbReference type="CDD" id="cd16962">
    <property type="entry name" value="RuvC"/>
    <property type="match status" value="1"/>
</dbReference>
<dbReference type="FunFam" id="3.30.420.10:FF:000002">
    <property type="entry name" value="Crossover junction endodeoxyribonuclease RuvC"/>
    <property type="match status" value="1"/>
</dbReference>
<dbReference type="Gene3D" id="3.30.420.10">
    <property type="entry name" value="Ribonuclease H-like superfamily/Ribonuclease H"/>
    <property type="match status" value="1"/>
</dbReference>
<dbReference type="HAMAP" id="MF_00034">
    <property type="entry name" value="RuvC"/>
    <property type="match status" value="1"/>
</dbReference>
<dbReference type="InterPro" id="IPR012337">
    <property type="entry name" value="RNaseH-like_sf"/>
</dbReference>
<dbReference type="InterPro" id="IPR036397">
    <property type="entry name" value="RNaseH_sf"/>
</dbReference>
<dbReference type="InterPro" id="IPR020563">
    <property type="entry name" value="X-over_junc_endoDNase_Mg_BS"/>
</dbReference>
<dbReference type="InterPro" id="IPR002176">
    <property type="entry name" value="X-over_junc_endoDNase_RuvC"/>
</dbReference>
<dbReference type="NCBIfam" id="NF000711">
    <property type="entry name" value="PRK00039.2-1"/>
    <property type="match status" value="1"/>
</dbReference>
<dbReference type="NCBIfam" id="TIGR00228">
    <property type="entry name" value="ruvC"/>
    <property type="match status" value="1"/>
</dbReference>
<dbReference type="PANTHER" id="PTHR30194">
    <property type="entry name" value="CROSSOVER JUNCTION ENDODEOXYRIBONUCLEASE RUVC"/>
    <property type="match status" value="1"/>
</dbReference>
<dbReference type="PANTHER" id="PTHR30194:SF3">
    <property type="entry name" value="CROSSOVER JUNCTION ENDODEOXYRIBONUCLEASE RUVC"/>
    <property type="match status" value="1"/>
</dbReference>
<dbReference type="Pfam" id="PF02075">
    <property type="entry name" value="RuvC"/>
    <property type="match status" value="1"/>
</dbReference>
<dbReference type="PRINTS" id="PR00696">
    <property type="entry name" value="RSOLVASERUVC"/>
</dbReference>
<dbReference type="SUPFAM" id="SSF53098">
    <property type="entry name" value="Ribonuclease H-like"/>
    <property type="match status" value="1"/>
</dbReference>
<dbReference type="PROSITE" id="PS01321">
    <property type="entry name" value="RUVC"/>
    <property type="match status" value="1"/>
</dbReference>
<sequence length="173" mass="19126">MTIVLGIDPGSRITGYGVICKQGKILSYLASGCIRTKTNDFPNRLKRIYIDVNQVITQFKPLVFAIEQLFIAKNMNSALKLSQARSVAIVVAMNNNIPVFEYAARQVKKTLVGIGSADKHQVKHMVRTILNLSNNPQTDAADALAIAITHCYISENTNRISSKNLILARGRLR</sequence>
<accession>Q1LTF1</accession>
<evidence type="ECO:0000255" key="1">
    <source>
        <dbReference type="HAMAP-Rule" id="MF_00034"/>
    </source>
</evidence>
<reference key="1">
    <citation type="journal article" date="2006" name="PLoS Biol.">
        <title>Metabolic complementarity and genomics of the dual bacterial symbiosis of sharpshooters.</title>
        <authorList>
            <person name="Wu D."/>
            <person name="Daugherty S.C."/>
            <person name="Van Aken S.E."/>
            <person name="Pai G.H."/>
            <person name="Watkins K.L."/>
            <person name="Khouri H."/>
            <person name="Tallon L.J."/>
            <person name="Zaborsky J.M."/>
            <person name="Dunbar H.E."/>
            <person name="Tran P.L."/>
            <person name="Moran N.A."/>
            <person name="Eisen J.A."/>
        </authorList>
    </citation>
    <scope>NUCLEOTIDE SEQUENCE [LARGE SCALE GENOMIC DNA]</scope>
</reference>
<comment type="function">
    <text evidence="1">The RuvA-RuvB-RuvC complex processes Holliday junction (HJ) DNA during genetic recombination and DNA repair. Endonuclease that resolves HJ intermediates. Cleaves cruciform DNA by making single-stranded nicks across the HJ at symmetrical positions within the homologous arms, yielding a 5'-phosphate and a 3'-hydroxyl group; requires a central core of homology in the junction. The consensus cleavage sequence is 5'-(A/T)TT(C/G)-3'. Cleavage occurs on the 3'-side of the TT dinucleotide at the point of strand exchange. HJ branch migration catalyzed by RuvA-RuvB allows RuvC to scan DNA until it finds its consensus sequence, where it cleaves and resolves the cruciform DNA.</text>
</comment>
<comment type="catalytic activity">
    <reaction evidence="1">
        <text>Endonucleolytic cleavage at a junction such as a reciprocal single-stranded crossover between two homologous DNA duplexes (Holliday junction).</text>
        <dbReference type="EC" id="3.1.21.10"/>
    </reaction>
</comment>
<comment type="cofactor">
    <cofactor evidence="1">
        <name>Mg(2+)</name>
        <dbReference type="ChEBI" id="CHEBI:18420"/>
    </cofactor>
    <text evidence="1">Binds 2 Mg(2+) ion per subunit.</text>
</comment>
<comment type="subunit">
    <text evidence="1">Homodimer which binds Holliday junction (HJ) DNA. The HJ becomes 2-fold symmetrical on binding to RuvC with unstacked arms; it has a different conformation from HJ DNA in complex with RuvA. In the full resolvosome a probable DNA-RuvA(4)-RuvB(12)-RuvC(2) complex forms which resolves the HJ.</text>
</comment>
<comment type="subcellular location">
    <subcellularLocation>
        <location evidence="1">Cytoplasm</location>
    </subcellularLocation>
</comment>
<comment type="similarity">
    <text evidence="1">Belongs to the RuvC family.</text>
</comment>